<accession>A6LQK4</accession>
<organism>
    <name type="scientific">Clostridium beijerinckii (strain ATCC 51743 / NCIMB 8052)</name>
    <name type="common">Clostridium acetobutylicum</name>
    <dbReference type="NCBI Taxonomy" id="290402"/>
    <lineage>
        <taxon>Bacteria</taxon>
        <taxon>Bacillati</taxon>
        <taxon>Bacillota</taxon>
        <taxon>Clostridia</taxon>
        <taxon>Eubacteriales</taxon>
        <taxon>Clostridiaceae</taxon>
        <taxon>Clostridium</taxon>
    </lineage>
</organism>
<proteinExistence type="inferred from homology"/>
<evidence type="ECO:0000255" key="1">
    <source>
        <dbReference type="HAMAP-Rule" id="MF_00541"/>
    </source>
</evidence>
<reference key="1">
    <citation type="submission" date="2007-06" db="EMBL/GenBank/DDBJ databases">
        <title>Complete sequence of Clostridium beijerinckii NCIMB 8052.</title>
        <authorList>
            <consortium name="US DOE Joint Genome Institute"/>
            <person name="Copeland A."/>
            <person name="Lucas S."/>
            <person name="Lapidus A."/>
            <person name="Barry K."/>
            <person name="Detter J.C."/>
            <person name="Glavina del Rio T."/>
            <person name="Hammon N."/>
            <person name="Israni S."/>
            <person name="Dalin E."/>
            <person name="Tice H."/>
            <person name="Pitluck S."/>
            <person name="Sims D."/>
            <person name="Brettin T."/>
            <person name="Bruce D."/>
            <person name="Tapia R."/>
            <person name="Brainard J."/>
            <person name="Schmutz J."/>
            <person name="Larimer F."/>
            <person name="Land M."/>
            <person name="Hauser L."/>
            <person name="Kyrpides N."/>
            <person name="Mikhailova N."/>
            <person name="Bennet G."/>
            <person name="Cann I."/>
            <person name="Chen J.-S."/>
            <person name="Contreras A.L."/>
            <person name="Jones D."/>
            <person name="Kashket E."/>
            <person name="Mitchell W."/>
            <person name="Stoddard S."/>
            <person name="Schwarz W."/>
            <person name="Qureshi N."/>
            <person name="Young M."/>
            <person name="Shi Z."/>
            <person name="Ezeji T."/>
            <person name="White B."/>
            <person name="Blaschek H."/>
            <person name="Richardson P."/>
        </authorList>
    </citation>
    <scope>NUCLEOTIDE SEQUENCE [LARGE SCALE GENOMIC DNA]</scope>
    <source>
        <strain>ATCC 51743 / NCIMB 8052</strain>
    </source>
</reference>
<sequence>MNVKEKYELAKKEYEKWGIDVDKVLDELNKVKISIHCWQGDDVKGFEVVQNELSGGIQCNGNYPGAARNAEELRKDLDKALSLIPGKHKVNLHAIYLETNGEFVDRDEIKPEHFANWVKWAKENGLGLDFNPTIFSHPKSADGLTLSHPDKEIRDFWIRHSIASRKIGEYFGKELGQTCLTNIWIPDGYKDIPSDRLGPRRRLKESLDEIFKVQIDKKYNLDCVESKVFGIGAEAYTVGSNEFYLNYAAKNNIMSLMDTGHYHPTEVVSDKLSAMLLFDEKVALHVSRPVRWDSDHVVVYDDELKEIAKEIVRNDALDRVIIGLDFFDASINRIAAWTIGSRNMIKALLNAMLTPNDKLRELQEEGNFTERLALMEEFKTYPMGDIWNYYCEKNNVPVGESWIKEVKEYEKDVLSKRN</sequence>
<comment type="function">
    <text evidence="1">Catalyzes the interconversion of L-rhamnose and L-rhamnulose.</text>
</comment>
<comment type="catalytic activity">
    <reaction evidence="1">
        <text>L-rhamnopyranose = L-rhamnulose</text>
        <dbReference type="Rhea" id="RHEA:23160"/>
        <dbReference type="ChEBI" id="CHEBI:17897"/>
        <dbReference type="ChEBI" id="CHEBI:62346"/>
        <dbReference type="EC" id="5.3.1.14"/>
    </reaction>
</comment>
<comment type="cofactor">
    <cofactor evidence="1">
        <name>Mn(2+)</name>
        <dbReference type="ChEBI" id="CHEBI:29035"/>
    </cofactor>
    <text evidence="1">Binds 1 Mn(2+) ion per subunit.</text>
</comment>
<comment type="pathway">
    <text evidence="1">Carbohydrate degradation; L-rhamnose degradation; glycerone phosphate from L-rhamnose: step 1/3.</text>
</comment>
<comment type="subcellular location">
    <subcellularLocation>
        <location evidence="1">Cytoplasm</location>
    </subcellularLocation>
</comment>
<comment type="similarity">
    <text evidence="1">Belongs to the rhamnose isomerase family.</text>
</comment>
<protein>
    <recommendedName>
        <fullName evidence="1">L-rhamnose isomerase</fullName>
        <ecNumber evidence="1">5.3.1.14</ecNumber>
    </recommendedName>
</protein>
<name>RHAA_CLOB8</name>
<gene>
    <name evidence="1" type="primary">rhaA</name>
    <name type="ordered locus">Cbei_0446</name>
</gene>
<keyword id="KW-0963">Cytoplasm</keyword>
<keyword id="KW-0413">Isomerase</keyword>
<keyword id="KW-0464">Manganese</keyword>
<keyword id="KW-0479">Metal-binding</keyword>
<keyword id="KW-0684">Rhamnose metabolism</keyword>
<feature type="chain" id="PRO_1000081935" description="L-rhamnose isomerase">
    <location>
        <begin position="1"/>
        <end position="418"/>
    </location>
</feature>
<feature type="binding site" evidence="1">
    <location>
        <position position="261"/>
    </location>
    <ligand>
        <name>Mn(2+)</name>
        <dbReference type="ChEBI" id="CHEBI:29035"/>
    </ligand>
</feature>
<feature type="binding site" evidence="1">
    <location>
        <position position="293"/>
    </location>
    <ligand>
        <name>Mn(2+)</name>
        <dbReference type="ChEBI" id="CHEBI:29035"/>
    </ligand>
</feature>
<feature type="binding site" evidence="1">
    <location>
        <position position="295"/>
    </location>
    <ligand>
        <name>Mn(2+)</name>
        <dbReference type="ChEBI" id="CHEBI:29035"/>
    </ligand>
</feature>
<dbReference type="EC" id="5.3.1.14" evidence="1"/>
<dbReference type="EMBL" id="CP000721">
    <property type="protein sequence ID" value="ABR32634.1"/>
    <property type="molecule type" value="Genomic_DNA"/>
</dbReference>
<dbReference type="RefSeq" id="WP_011967795.1">
    <property type="nucleotide sequence ID" value="NC_009617.1"/>
</dbReference>
<dbReference type="SMR" id="A6LQK4"/>
<dbReference type="KEGG" id="cbe:Cbei_0446"/>
<dbReference type="eggNOG" id="COG4806">
    <property type="taxonomic scope" value="Bacteria"/>
</dbReference>
<dbReference type="HOGENOM" id="CLU_052790_0_0_9"/>
<dbReference type="UniPathway" id="UPA00541">
    <property type="reaction ID" value="UER00601"/>
</dbReference>
<dbReference type="Proteomes" id="UP000000565">
    <property type="component" value="Chromosome"/>
</dbReference>
<dbReference type="GO" id="GO:0005737">
    <property type="term" value="C:cytoplasm"/>
    <property type="evidence" value="ECO:0007669"/>
    <property type="project" value="UniProtKB-SubCell"/>
</dbReference>
<dbReference type="GO" id="GO:0008740">
    <property type="term" value="F:L-rhamnose isomerase activity"/>
    <property type="evidence" value="ECO:0007669"/>
    <property type="project" value="UniProtKB-UniRule"/>
</dbReference>
<dbReference type="GO" id="GO:0030145">
    <property type="term" value="F:manganese ion binding"/>
    <property type="evidence" value="ECO:0007669"/>
    <property type="project" value="UniProtKB-UniRule"/>
</dbReference>
<dbReference type="GO" id="GO:0019324">
    <property type="term" value="P:L-lyxose metabolic process"/>
    <property type="evidence" value="ECO:0007669"/>
    <property type="project" value="TreeGrafter"/>
</dbReference>
<dbReference type="GO" id="GO:0019301">
    <property type="term" value="P:rhamnose catabolic process"/>
    <property type="evidence" value="ECO:0007669"/>
    <property type="project" value="UniProtKB-UniRule"/>
</dbReference>
<dbReference type="Gene3D" id="3.20.20.150">
    <property type="entry name" value="Divalent-metal-dependent TIM barrel enzymes"/>
    <property type="match status" value="1"/>
</dbReference>
<dbReference type="HAMAP" id="MF_00541">
    <property type="entry name" value="RhaA"/>
    <property type="match status" value="1"/>
</dbReference>
<dbReference type="InterPro" id="IPR050337">
    <property type="entry name" value="L-rhamnose_isomerase"/>
</dbReference>
<dbReference type="InterPro" id="IPR009308">
    <property type="entry name" value="Rhamnose_isomerase"/>
</dbReference>
<dbReference type="InterPro" id="IPR036237">
    <property type="entry name" value="Xyl_isomerase-like_sf"/>
</dbReference>
<dbReference type="NCBIfam" id="NF002203">
    <property type="entry name" value="PRK01076.1"/>
    <property type="match status" value="1"/>
</dbReference>
<dbReference type="NCBIfam" id="TIGR01748">
    <property type="entry name" value="rhaA"/>
    <property type="match status" value="1"/>
</dbReference>
<dbReference type="PANTHER" id="PTHR30268">
    <property type="entry name" value="L-RHAMNOSE ISOMERASE"/>
    <property type="match status" value="1"/>
</dbReference>
<dbReference type="PANTHER" id="PTHR30268:SF0">
    <property type="entry name" value="L-RHAMNOSE ISOMERASE"/>
    <property type="match status" value="1"/>
</dbReference>
<dbReference type="Pfam" id="PF06134">
    <property type="entry name" value="RhaA"/>
    <property type="match status" value="1"/>
</dbReference>
<dbReference type="SUPFAM" id="SSF51658">
    <property type="entry name" value="Xylose isomerase-like"/>
    <property type="match status" value="1"/>
</dbReference>